<sequence length="177" mass="19879">MASLNMIVAVNKTGGIGFENQIPWHEPEDLKHFKAVTMNSVLIMGRKTFASLPKVLPGRLHVVVSKTVPPTQNTDQVVYVSTYQIAVRTASLLVDKPEYSQIFVIGGKSAYENLAAYVDKLYLTRVQLNTQQDTELDLSLFKSWKLVSEVPTITENKTKLIFQIWINPNPISEEPTC</sequence>
<proteinExistence type="inferred from homology"/>
<name>DYR9_ECOLX</name>
<feature type="chain" id="PRO_0000186427" description="Dihydrofolate reductase type 9">
    <location>
        <begin position="1"/>
        <end position="177"/>
    </location>
</feature>
<feature type="domain" description="DHFR" evidence="2">
    <location>
        <begin position="3"/>
        <end position="167"/>
    </location>
</feature>
<organism>
    <name type="scientific">Escherichia coli</name>
    <dbReference type="NCBI Taxonomy" id="562"/>
    <lineage>
        <taxon>Bacteria</taxon>
        <taxon>Pseudomonadati</taxon>
        <taxon>Pseudomonadota</taxon>
        <taxon>Gammaproteobacteria</taxon>
        <taxon>Enterobacterales</taxon>
        <taxon>Enterobacteriaceae</taxon>
        <taxon>Escherichia</taxon>
    </lineage>
</organism>
<gene>
    <name type="primary">dhfrIX</name>
</gene>
<dbReference type="EC" id="1.5.1.3"/>
<dbReference type="EMBL" id="X57730">
    <property type="protein sequence ID" value="CAA40897.1"/>
    <property type="molecule type" value="Genomic_DNA"/>
</dbReference>
<dbReference type="PIR" id="A49788">
    <property type="entry name" value="A49788"/>
</dbReference>
<dbReference type="RefSeq" id="WP_063844475.1">
    <property type="nucleotide sequence ID" value="NG_047742.1"/>
</dbReference>
<dbReference type="SMR" id="Q59397"/>
<dbReference type="CARD" id="ARO:3004548">
    <property type="molecule name" value="dfrA9"/>
    <property type="mechanism identifier" value="ARO:0001002"/>
    <property type="mechanism name" value="antibiotic target replacement"/>
</dbReference>
<dbReference type="KEGG" id="ag:CAA40897"/>
<dbReference type="UniPathway" id="UPA00077">
    <property type="reaction ID" value="UER00158"/>
</dbReference>
<dbReference type="GO" id="GO:0004146">
    <property type="term" value="F:dihydrofolate reductase activity"/>
    <property type="evidence" value="ECO:0007669"/>
    <property type="project" value="UniProtKB-EC"/>
</dbReference>
<dbReference type="GO" id="GO:0050661">
    <property type="term" value="F:NADP binding"/>
    <property type="evidence" value="ECO:0007669"/>
    <property type="project" value="InterPro"/>
</dbReference>
<dbReference type="GO" id="GO:0046452">
    <property type="term" value="P:dihydrofolate metabolic process"/>
    <property type="evidence" value="ECO:0007669"/>
    <property type="project" value="TreeGrafter"/>
</dbReference>
<dbReference type="GO" id="GO:0046655">
    <property type="term" value="P:folic acid metabolic process"/>
    <property type="evidence" value="ECO:0007669"/>
    <property type="project" value="TreeGrafter"/>
</dbReference>
<dbReference type="GO" id="GO:0006730">
    <property type="term" value="P:one-carbon metabolic process"/>
    <property type="evidence" value="ECO:0007669"/>
    <property type="project" value="UniProtKB-KW"/>
</dbReference>
<dbReference type="GO" id="GO:0046677">
    <property type="term" value="P:response to antibiotic"/>
    <property type="evidence" value="ECO:0007669"/>
    <property type="project" value="UniProtKB-KW"/>
</dbReference>
<dbReference type="GO" id="GO:0031427">
    <property type="term" value="P:response to methotrexate"/>
    <property type="evidence" value="ECO:0007669"/>
    <property type="project" value="UniProtKB-KW"/>
</dbReference>
<dbReference type="GO" id="GO:0046654">
    <property type="term" value="P:tetrahydrofolate biosynthetic process"/>
    <property type="evidence" value="ECO:0007669"/>
    <property type="project" value="UniProtKB-UniPathway"/>
</dbReference>
<dbReference type="CDD" id="cd00209">
    <property type="entry name" value="DHFR"/>
    <property type="match status" value="1"/>
</dbReference>
<dbReference type="Gene3D" id="3.40.430.10">
    <property type="entry name" value="Dihydrofolate Reductase, subunit A"/>
    <property type="match status" value="1"/>
</dbReference>
<dbReference type="InterPro" id="IPR012259">
    <property type="entry name" value="DHFR"/>
</dbReference>
<dbReference type="InterPro" id="IPR024072">
    <property type="entry name" value="DHFR-like_dom_sf"/>
</dbReference>
<dbReference type="InterPro" id="IPR017925">
    <property type="entry name" value="DHFR_CS"/>
</dbReference>
<dbReference type="InterPro" id="IPR001796">
    <property type="entry name" value="DHFR_dom"/>
</dbReference>
<dbReference type="NCBIfam" id="NF000109">
    <property type="entry name" value="trim_DfrA9"/>
    <property type="match status" value="1"/>
</dbReference>
<dbReference type="PANTHER" id="PTHR48069">
    <property type="entry name" value="DIHYDROFOLATE REDUCTASE"/>
    <property type="match status" value="1"/>
</dbReference>
<dbReference type="PANTHER" id="PTHR48069:SF3">
    <property type="entry name" value="DIHYDROFOLATE REDUCTASE"/>
    <property type="match status" value="1"/>
</dbReference>
<dbReference type="Pfam" id="PF00186">
    <property type="entry name" value="DHFR_1"/>
    <property type="match status" value="1"/>
</dbReference>
<dbReference type="PRINTS" id="PR00070">
    <property type="entry name" value="DHFR"/>
</dbReference>
<dbReference type="SUPFAM" id="SSF53597">
    <property type="entry name" value="Dihydrofolate reductase-like"/>
    <property type="match status" value="1"/>
</dbReference>
<dbReference type="PROSITE" id="PS00075">
    <property type="entry name" value="DHFR_1"/>
    <property type="match status" value="1"/>
</dbReference>
<dbReference type="PROSITE" id="PS51330">
    <property type="entry name" value="DHFR_2"/>
    <property type="match status" value="1"/>
</dbReference>
<geneLocation type="plasmid">
    <name>pCJOO1</name>
</geneLocation>
<comment type="function">
    <text evidence="1 3">Key enzyme in folate metabolism. Catalyzes an essential reaction for de novo glycine and purine synthesis, and for DNA precursor synthesis (By similarity).</text>
</comment>
<comment type="catalytic activity">
    <reaction evidence="2">
        <text>(6S)-5,6,7,8-tetrahydrofolate + NADP(+) = 7,8-dihydrofolate + NADPH + H(+)</text>
        <dbReference type="Rhea" id="RHEA:15009"/>
        <dbReference type="ChEBI" id="CHEBI:15378"/>
        <dbReference type="ChEBI" id="CHEBI:57451"/>
        <dbReference type="ChEBI" id="CHEBI:57453"/>
        <dbReference type="ChEBI" id="CHEBI:57783"/>
        <dbReference type="ChEBI" id="CHEBI:58349"/>
        <dbReference type="EC" id="1.5.1.3"/>
    </reaction>
</comment>
<comment type="pathway">
    <text>Cofactor biosynthesis; tetrahydrofolate biosynthesis; 5,6,7,8-tetrahydrofolate from 7,8-dihydrofolate: step 1/1.</text>
</comment>
<comment type="subunit">
    <text evidence="1">Homodimer.</text>
</comment>
<comment type="miscellaneous">
    <text evidence="3">Confers trimethoprim resistance.</text>
</comment>
<comment type="similarity">
    <text evidence="4">Belongs to the dihydrofolate reductase family.</text>
</comment>
<evidence type="ECO:0000250" key="1"/>
<evidence type="ECO:0000255" key="2">
    <source>
        <dbReference type="PROSITE-ProRule" id="PRU00660"/>
    </source>
</evidence>
<evidence type="ECO:0000269" key="3">
    <source>
    </source>
</evidence>
<evidence type="ECO:0000305" key="4"/>
<protein>
    <recommendedName>
        <fullName>Dihydrofolate reductase type 9</fullName>
        <ecNumber>1.5.1.3</ecNumber>
    </recommendedName>
    <alternativeName>
        <fullName>Dihydrofolate reductase type IX</fullName>
    </alternativeName>
</protein>
<keyword id="KW-0046">Antibiotic resistance</keyword>
<keyword id="KW-0487">Methotrexate resistance</keyword>
<keyword id="KW-0521">NADP</keyword>
<keyword id="KW-0554">One-carbon metabolism</keyword>
<keyword id="KW-0560">Oxidoreductase</keyword>
<keyword id="KW-0614">Plasmid</keyword>
<keyword id="KW-0817">Trimethoprim resistance</keyword>
<reference key="1">
    <citation type="journal article" date="1991" name="Antimicrob. Agents Chemother.">
        <title>Appearance of a new trimethoprim resistance gene, dhfrIX, in Escherichia coli from swine.</title>
        <authorList>
            <person name="Jansson C."/>
            <person name="Skoeld O."/>
        </authorList>
    </citation>
    <scope>NUCLEOTIDE SEQUENCE [GENOMIC DNA]</scope>
    <scope>FUNCTION</scope>
    <source>
        <strain>3926</strain>
    </source>
</reference>
<accession>Q59397</accession>